<protein>
    <recommendedName>
        <fullName evidence="1">Disulfide bond formation protein B 2</fullName>
    </recommendedName>
    <alternativeName>
        <fullName evidence="1">Disulfide oxidoreductase 2</fullName>
    </alternativeName>
</protein>
<accession>Q38ZZ5</accession>
<sequence length="168" mass="17998">MSAPIGATRAERWTLLAIGVASFELVAGALWIQLAWQEDPCPLCIIQRYLFLLIALFTFVAAAGGRRVALLRVLSLTTALAGAAVAVRHIYVQAHPGFSCGFDALQPVIDSLPPAHWLPPVFKVGGLCETLYPPILGLSLPMWALVGFSAIAVALGWRIRAQAVIRTA</sequence>
<dbReference type="EMBL" id="CP000152">
    <property type="protein sequence ID" value="ABB13221.1"/>
    <property type="molecule type" value="Genomic_DNA"/>
</dbReference>
<dbReference type="RefSeq" id="WP_011356700.1">
    <property type="nucleotide sequence ID" value="NC_007511.1"/>
</dbReference>
<dbReference type="GeneID" id="45099412"/>
<dbReference type="KEGG" id="bur:Bcep18194_B3111"/>
<dbReference type="PATRIC" id="fig|482957.22.peg.6940"/>
<dbReference type="HOGENOM" id="CLU_098660_1_0_4"/>
<dbReference type="Proteomes" id="UP000002705">
    <property type="component" value="Chromosome 2"/>
</dbReference>
<dbReference type="GO" id="GO:0005886">
    <property type="term" value="C:plasma membrane"/>
    <property type="evidence" value="ECO:0007669"/>
    <property type="project" value="UniProtKB-SubCell"/>
</dbReference>
<dbReference type="GO" id="GO:0009055">
    <property type="term" value="F:electron transfer activity"/>
    <property type="evidence" value="ECO:0007669"/>
    <property type="project" value="UniProtKB-UniRule"/>
</dbReference>
<dbReference type="GO" id="GO:0015035">
    <property type="term" value="F:protein-disulfide reductase activity"/>
    <property type="evidence" value="ECO:0007669"/>
    <property type="project" value="UniProtKB-UniRule"/>
</dbReference>
<dbReference type="GO" id="GO:0006457">
    <property type="term" value="P:protein folding"/>
    <property type="evidence" value="ECO:0007669"/>
    <property type="project" value="InterPro"/>
</dbReference>
<dbReference type="Gene3D" id="1.20.1550.10">
    <property type="entry name" value="DsbB-like"/>
    <property type="match status" value="1"/>
</dbReference>
<dbReference type="HAMAP" id="MF_00286">
    <property type="entry name" value="DsbB"/>
    <property type="match status" value="1"/>
</dbReference>
<dbReference type="InterPro" id="IPR003752">
    <property type="entry name" value="DiS_bond_form_DsbB/BdbC"/>
</dbReference>
<dbReference type="InterPro" id="IPR022920">
    <property type="entry name" value="Disulphide_bond_form_DsbB"/>
</dbReference>
<dbReference type="InterPro" id="IPR050183">
    <property type="entry name" value="DsbB"/>
</dbReference>
<dbReference type="InterPro" id="IPR023380">
    <property type="entry name" value="DsbB-like_sf"/>
</dbReference>
<dbReference type="NCBIfam" id="NF002552">
    <property type="entry name" value="PRK02110.1"/>
    <property type="match status" value="1"/>
</dbReference>
<dbReference type="PANTHER" id="PTHR36570">
    <property type="entry name" value="DISULFIDE BOND FORMATION PROTEIN B"/>
    <property type="match status" value="1"/>
</dbReference>
<dbReference type="PANTHER" id="PTHR36570:SF3">
    <property type="entry name" value="DISULFIDE BOND FORMATION PROTEIN B"/>
    <property type="match status" value="1"/>
</dbReference>
<dbReference type="Pfam" id="PF02600">
    <property type="entry name" value="DsbB"/>
    <property type="match status" value="1"/>
</dbReference>
<dbReference type="SUPFAM" id="SSF158442">
    <property type="entry name" value="DsbB-like"/>
    <property type="match status" value="1"/>
</dbReference>
<reference key="1">
    <citation type="submission" date="2005-10" db="EMBL/GenBank/DDBJ databases">
        <title>Complete sequence of chromosome 2 of Burkholderia sp. 383.</title>
        <authorList>
            <consortium name="US DOE Joint Genome Institute"/>
            <person name="Copeland A."/>
            <person name="Lucas S."/>
            <person name="Lapidus A."/>
            <person name="Barry K."/>
            <person name="Detter J.C."/>
            <person name="Glavina T."/>
            <person name="Hammon N."/>
            <person name="Israni S."/>
            <person name="Pitluck S."/>
            <person name="Chain P."/>
            <person name="Malfatti S."/>
            <person name="Shin M."/>
            <person name="Vergez L."/>
            <person name="Schmutz J."/>
            <person name="Larimer F."/>
            <person name="Land M."/>
            <person name="Kyrpides N."/>
            <person name="Lykidis A."/>
            <person name="Richardson P."/>
        </authorList>
    </citation>
    <scope>NUCLEOTIDE SEQUENCE [LARGE SCALE GENOMIC DNA]</scope>
    <source>
        <strain>ATCC 17760 / DSM 23089 / LMG 22485 / NCIMB 9086 / R18194 / 383</strain>
    </source>
</reference>
<organism>
    <name type="scientific">Burkholderia lata (strain ATCC 17760 / DSM 23089 / LMG 22485 / NCIMB 9086 / R18194 / 383)</name>
    <dbReference type="NCBI Taxonomy" id="482957"/>
    <lineage>
        <taxon>Bacteria</taxon>
        <taxon>Pseudomonadati</taxon>
        <taxon>Pseudomonadota</taxon>
        <taxon>Betaproteobacteria</taxon>
        <taxon>Burkholderiales</taxon>
        <taxon>Burkholderiaceae</taxon>
        <taxon>Burkholderia</taxon>
        <taxon>Burkholderia cepacia complex</taxon>
    </lineage>
</organism>
<comment type="function">
    <text evidence="1">Required for disulfide bond formation in some periplasmic proteins. Acts by oxidizing the DsbA protein.</text>
</comment>
<comment type="subcellular location">
    <subcellularLocation>
        <location evidence="1">Cell inner membrane</location>
        <topology evidence="1">Multi-pass membrane protein</topology>
    </subcellularLocation>
</comment>
<comment type="similarity">
    <text evidence="1">Belongs to the DsbB family.</text>
</comment>
<evidence type="ECO:0000255" key="1">
    <source>
        <dbReference type="HAMAP-Rule" id="MF_00286"/>
    </source>
</evidence>
<feature type="chain" id="PRO_0000298349" description="Disulfide bond formation protein B 2">
    <location>
        <begin position="1"/>
        <end position="168"/>
    </location>
</feature>
<feature type="topological domain" description="Cytoplasmic" evidence="1">
    <location>
        <begin position="1"/>
        <end position="14"/>
    </location>
</feature>
<feature type="transmembrane region" description="Helical" evidence="1">
    <location>
        <begin position="15"/>
        <end position="31"/>
    </location>
</feature>
<feature type="topological domain" description="Periplasmic" evidence="1">
    <location>
        <begin position="32"/>
        <end position="49"/>
    </location>
</feature>
<feature type="transmembrane region" description="Helical" evidence="1">
    <location>
        <begin position="50"/>
        <end position="64"/>
    </location>
</feature>
<feature type="topological domain" description="Cytoplasmic" evidence="1">
    <location>
        <begin position="65"/>
        <end position="69"/>
    </location>
</feature>
<feature type="transmembrane region" description="Helical" evidence="1">
    <location>
        <begin position="70"/>
        <end position="87"/>
    </location>
</feature>
<feature type="topological domain" description="Periplasmic" evidence="1">
    <location>
        <begin position="88"/>
        <end position="142"/>
    </location>
</feature>
<feature type="transmembrane region" description="Helical" evidence="1">
    <location>
        <begin position="143"/>
        <end position="161"/>
    </location>
</feature>
<feature type="topological domain" description="Cytoplasmic" evidence="1">
    <location>
        <begin position="162"/>
        <end position="168"/>
    </location>
</feature>
<feature type="disulfide bond" description="Redox-active" evidence="1">
    <location>
        <begin position="41"/>
        <end position="44"/>
    </location>
</feature>
<feature type="disulfide bond" description="Redox-active" evidence="1">
    <location>
        <begin position="100"/>
        <end position="128"/>
    </location>
</feature>
<name>DSBB2_BURL3</name>
<gene>
    <name evidence="1" type="primary">dsbB2</name>
    <name type="ordered locus">Bcep18194_B3111</name>
</gene>
<proteinExistence type="inferred from homology"/>
<keyword id="KW-0997">Cell inner membrane</keyword>
<keyword id="KW-1003">Cell membrane</keyword>
<keyword id="KW-0143">Chaperone</keyword>
<keyword id="KW-1015">Disulfide bond</keyword>
<keyword id="KW-0249">Electron transport</keyword>
<keyword id="KW-0472">Membrane</keyword>
<keyword id="KW-0560">Oxidoreductase</keyword>
<keyword id="KW-0676">Redox-active center</keyword>
<keyword id="KW-0812">Transmembrane</keyword>
<keyword id="KW-1133">Transmembrane helix</keyword>
<keyword id="KW-0813">Transport</keyword>